<protein>
    <recommendedName>
        <fullName evidence="1">Arginine biosynthesis bifunctional protein ArgJ</fullName>
    </recommendedName>
    <domain>
        <recommendedName>
            <fullName evidence="1">Glutamate N-acetyltransferase</fullName>
            <ecNumber evidence="1">2.3.1.35</ecNumber>
        </recommendedName>
        <alternativeName>
            <fullName evidence="1">Ornithine acetyltransferase</fullName>
            <shortName evidence="1">OATase</shortName>
        </alternativeName>
        <alternativeName>
            <fullName evidence="1">Ornithine transacetylase</fullName>
        </alternativeName>
    </domain>
    <domain>
        <recommendedName>
            <fullName evidence="1">Amino-acid acetyltransferase</fullName>
            <ecNumber evidence="1">2.3.1.1</ecNumber>
        </recommendedName>
        <alternativeName>
            <fullName evidence="1">N-acetylglutamate synthase</fullName>
            <shortName evidence="1">AGSase</shortName>
        </alternativeName>
    </domain>
    <component>
        <recommendedName>
            <fullName evidence="1">Arginine biosynthesis bifunctional protein ArgJ alpha chain</fullName>
        </recommendedName>
    </component>
    <component>
        <recommendedName>
            <fullName evidence="1">Arginine biosynthesis bifunctional protein ArgJ beta chain</fullName>
        </recommendedName>
    </component>
</protein>
<feature type="chain" id="PRO_0000227230" description="Arginine biosynthesis bifunctional protein ArgJ alpha chain" evidence="1">
    <location>
        <begin position="1"/>
        <end position="208"/>
    </location>
</feature>
<feature type="chain" id="PRO_0000227231" description="Arginine biosynthesis bifunctional protein ArgJ beta chain" evidence="1">
    <location>
        <begin position="209"/>
        <end position="424"/>
    </location>
</feature>
<feature type="active site" description="Nucleophile" evidence="1">
    <location>
        <position position="209"/>
    </location>
</feature>
<feature type="binding site" evidence="1">
    <location>
        <position position="172"/>
    </location>
    <ligand>
        <name>substrate</name>
    </ligand>
</feature>
<feature type="binding site" evidence="1">
    <location>
        <position position="198"/>
    </location>
    <ligand>
        <name>substrate</name>
    </ligand>
</feature>
<feature type="binding site" evidence="1">
    <location>
        <position position="209"/>
    </location>
    <ligand>
        <name>substrate</name>
    </ligand>
</feature>
<feature type="binding site" evidence="1">
    <location>
        <position position="296"/>
    </location>
    <ligand>
        <name>substrate</name>
    </ligand>
</feature>
<feature type="binding site" evidence="1">
    <location>
        <position position="419"/>
    </location>
    <ligand>
        <name>substrate</name>
    </ligand>
</feature>
<feature type="binding site" evidence="1">
    <location>
        <position position="424"/>
    </location>
    <ligand>
        <name>substrate</name>
    </ligand>
</feature>
<feature type="site" description="Involved in the stabilization of negative charge on the oxyanion by the formation of the oxyanion hole" evidence="1">
    <location>
        <position position="135"/>
    </location>
</feature>
<feature type="site" description="Involved in the stabilization of negative charge on the oxyanion by the formation of the oxyanion hole" evidence="1">
    <location>
        <position position="136"/>
    </location>
</feature>
<feature type="site" description="Cleavage; by autolysis" evidence="1">
    <location>
        <begin position="208"/>
        <end position="209"/>
    </location>
</feature>
<gene>
    <name evidence="1" type="primary">argJ</name>
    <name type="ordered locus">GOX1676</name>
</gene>
<sequence>MQLRLPHLQRSKSMAKPLPVSPLARPLPDLATIAGVRLSAVAAGIRYQGRTDLMLAEFVPGTVAAGVYTKNACPGAPVLWCREALTTPYARALLVNAGNANVFTGRAGIQACEDCADATAQLLDCPPQDVFLASTGVIGEKLPQDRIIAALPAARAGLEENGWADAARAIMTTDTFPKAARRDVKINGTPVRIQGIAKGSGMVAPDMATMLAYVATDAKLPQNVLQSLLASGCAQSFNSITVDSDTSTSDMLMIFATGLADNPEVDDVNDPALAEFTLALNDLLLELALMVVRDGEGATKLVRIAVTGADSNLSAHRIALCIANSPLVKTAIAGEDANWGRVVMAVGKSGEPADRDRLSVAIGGTWIAKDGGVVENYDEAPVVAHMKGQEIEIAVDLDLGDGQARVWTCDLTHGYIDINGSYRS</sequence>
<dbReference type="EC" id="2.3.1.35" evidence="1"/>
<dbReference type="EC" id="2.3.1.1" evidence="1"/>
<dbReference type="EMBL" id="CP000009">
    <property type="protein sequence ID" value="AAW61416.1"/>
    <property type="molecule type" value="Genomic_DNA"/>
</dbReference>
<dbReference type="SMR" id="Q5FQD0"/>
<dbReference type="STRING" id="290633.GOX1676"/>
<dbReference type="MEROPS" id="T05.001"/>
<dbReference type="KEGG" id="gox:GOX1676"/>
<dbReference type="eggNOG" id="COG1364">
    <property type="taxonomic scope" value="Bacteria"/>
</dbReference>
<dbReference type="HOGENOM" id="CLU_027172_1_0_5"/>
<dbReference type="UniPathway" id="UPA00068">
    <property type="reaction ID" value="UER00106"/>
</dbReference>
<dbReference type="UniPathway" id="UPA00068">
    <property type="reaction ID" value="UER00111"/>
</dbReference>
<dbReference type="Proteomes" id="UP000006375">
    <property type="component" value="Chromosome"/>
</dbReference>
<dbReference type="GO" id="GO:0005737">
    <property type="term" value="C:cytoplasm"/>
    <property type="evidence" value="ECO:0007669"/>
    <property type="project" value="UniProtKB-SubCell"/>
</dbReference>
<dbReference type="GO" id="GO:0004358">
    <property type="term" value="F:glutamate N-acetyltransferase activity"/>
    <property type="evidence" value="ECO:0007669"/>
    <property type="project" value="UniProtKB-UniRule"/>
</dbReference>
<dbReference type="GO" id="GO:0004042">
    <property type="term" value="F:L-glutamate N-acetyltransferase activity"/>
    <property type="evidence" value="ECO:0007669"/>
    <property type="project" value="UniProtKB-UniRule"/>
</dbReference>
<dbReference type="GO" id="GO:0006526">
    <property type="term" value="P:L-arginine biosynthetic process"/>
    <property type="evidence" value="ECO:0007669"/>
    <property type="project" value="UniProtKB-UniRule"/>
</dbReference>
<dbReference type="GO" id="GO:0006592">
    <property type="term" value="P:ornithine biosynthetic process"/>
    <property type="evidence" value="ECO:0007669"/>
    <property type="project" value="TreeGrafter"/>
</dbReference>
<dbReference type="CDD" id="cd02152">
    <property type="entry name" value="OAT"/>
    <property type="match status" value="1"/>
</dbReference>
<dbReference type="FunFam" id="3.10.20.340:FF:000003">
    <property type="entry name" value="Arginine biosynthesis bifunctional protein ArgJ"/>
    <property type="match status" value="1"/>
</dbReference>
<dbReference type="FunFam" id="3.60.70.12:FF:000001">
    <property type="entry name" value="Arginine biosynthesis bifunctional protein ArgJ, chloroplastic"/>
    <property type="match status" value="1"/>
</dbReference>
<dbReference type="Gene3D" id="3.10.20.340">
    <property type="entry name" value="ArgJ beta chain, C-terminal domain"/>
    <property type="match status" value="1"/>
</dbReference>
<dbReference type="Gene3D" id="3.60.70.12">
    <property type="entry name" value="L-amino peptidase D-ALA esterase/amidase"/>
    <property type="match status" value="1"/>
</dbReference>
<dbReference type="HAMAP" id="MF_01106">
    <property type="entry name" value="ArgJ"/>
    <property type="match status" value="1"/>
</dbReference>
<dbReference type="InterPro" id="IPR002813">
    <property type="entry name" value="Arg_biosynth_ArgJ"/>
</dbReference>
<dbReference type="InterPro" id="IPR016117">
    <property type="entry name" value="ArgJ-like_dom_sf"/>
</dbReference>
<dbReference type="InterPro" id="IPR042195">
    <property type="entry name" value="ArgJ_beta_C"/>
</dbReference>
<dbReference type="NCBIfam" id="TIGR00120">
    <property type="entry name" value="ArgJ"/>
    <property type="match status" value="1"/>
</dbReference>
<dbReference type="NCBIfam" id="NF003802">
    <property type="entry name" value="PRK05388.1"/>
    <property type="match status" value="1"/>
</dbReference>
<dbReference type="PANTHER" id="PTHR23100">
    <property type="entry name" value="ARGININE BIOSYNTHESIS BIFUNCTIONAL PROTEIN ARGJ"/>
    <property type="match status" value="1"/>
</dbReference>
<dbReference type="PANTHER" id="PTHR23100:SF0">
    <property type="entry name" value="ARGININE BIOSYNTHESIS BIFUNCTIONAL PROTEIN ARGJ, MITOCHONDRIAL"/>
    <property type="match status" value="1"/>
</dbReference>
<dbReference type="Pfam" id="PF01960">
    <property type="entry name" value="ArgJ"/>
    <property type="match status" value="1"/>
</dbReference>
<dbReference type="SUPFAM" id="SSF56266">
    <property type="entry name" value="DmpA/ArgJ-like"/>
    <property type="match status" value="1"/>
</dbReference>
<evidence type="ECO:0000255" key="1">
    <source>
        <dbReference type="HAMAP-Rule" id="MF_01106"/>
    </source>
</evidence>
<name>ARGJ_GLUOX</name>
<accession>Q5FQD0</accession>
<keyword id="KW-0012">Acyltransferase</keyword>
<keyword id="KW-0028">Amino-acid biosynthesis</keyword>
<keyword id="KW-0055">Arginine biosynthesis</keyword>
<keyword id="KW-0068">Autocatalytic cleavage</keyword>
<keyword id="KW-0963">Cytoplasm</keyword>
<keyword id="KW-0511">Multifunctional enzyme</keyword>
<keyword id="KW-1185">Reference proteome</keyword>
<keyword id="KW-0808">Transferase</keyword>
<reference key="1">
    <citation type="journal article" date="2005" name="Nat. Biotechnol.">
        <title>Complete genome sequence of the acetic acid bacterium Gluconobacter oxydans.</title>
        <authorList>
            <person name="Prust C."/>
            <person name="Hoffmeister M."/>
            <person name="Liesegang H."/>
            <person name="Wiezer A."/>
            <person name="Fricke W.F."/>
            <person name="Ehrenreich A."/>
            <person name="Gottschalk G."/>
            <person name="Deppenmeier U."/>
        </authorList>
    </citation>
    <scope>NUCLEOTIDE SEQUENCE [LARGE SCALE GENOMIC DNA]</scope>
    <source>
        <strain>621H</strain>
    </source>
</reference>
<comment type="function">
    <text evidence="1">Catalyzes two activities which are involved in the cyclic version of arginine biosynthesis: the synthesis of N-acetylglutamate from glutamate and acetyl-CoA as the acetyl donor, and of ornithine by transacetylation between N(2)-acetylornithine and glutamate.</text>
</comment>
<comment type="catalytic activity">
    <reaction evidence="1">
        <text>N(2)-acetyl-L-ornithine + L-glutamate = N-acetyl-L-glutamate + L-ornithine</text>
        <dbReference type="Rhea" id="RHEA:15349"/>
        <dbReference type="ChEBI" id="CHEBI:29985"/>
        <dbReference type="ChEBI" id="CHEBI:44337"/>
        <dbReference type="ChEBI" id="CHEBI:46911"/>
        <dbReference type="ChEBI" id="CHEBI:57805"/>
        <dbReference type="EC" id="2.3.1.35"/>
    </reaction>
</comment>
<comment type="catalytic activity">
    <reaction evidence="1">
        <text>L-glutamate + acetyl-CoA = N-acetyl-L-glutamate + CoA + H(+)</text>
        <dbReference type="Rhea" id="RHEA:24292"/>
        <dbReference type="ChEBI" id="CHEBI:15378"/>
        <dbReference type="ChEBI" id="CHEBI:29985"/>
        <dbReference type="ChEBI" id="CHEBI:44337"/>
        <dbReference type="ChEBI" id="CHEBI:57287"/>
        <dbReference type="ChEBI" id="CHEBI:57288"/>
        <dbReference type="EC" id="2.3.1.1"/>
    </reaction>
</comment>
<comment type="pathway">
    <text evidence="1">Amino-acid biosynthesis; L-arginine biosynthesis; L-ornithine and N-acetyl-L-glutamate from L-glutamate and N(2)-acetyl-L-ornithine (cyclic): step 1/1.</text>
</comment>
<comment type="pathway">
    <text evidence="1">Amino-acid biosynthesis; L-arginine biosynthesis; N(2)-acetyl-L-ornithine from L-glutamate: step 1/4.</text>
</comment>
<comment type="subunit">
    <text evidence="1">Heterotetramer of two alpha and two beta chains.</text>
</comment>
<comment type="subcellular location">
    <subcellularLocation>
        <location evidence="1">Cytoplasm</location>
    </subcellularLocation>
</comment>
<comment type="similarity">
    <text evidence="1">Belongs to the ArgJ family.</text>
</comment>
<organism>
    <name type="scientific">Gluconobacter oxydans (strain 621H)</name>
    <name type="common">Gluconobacter suboxydans</name>
    <dbReference type="NCBI Taxonomy" id="290633"/>
    <lineage>
        <taxon>Bacteria</taxon>
        <taxon>Pseudomonadati</taxon>
        <taxon>Pseudomonadota</taxon>
        <taxon>Alphaproteobacteria</taxon>
        <taxon>Acetobacterales</taxon>
        <taxon>Acetobacteraceae</taxon>
        <taxon>Gluconobacter</taxon>
    </lineage>
</organism>
<proteinExistence type="inferred from homology"/>